<comment type="function">
    <text evidence="1">Casein kinases are operationally defined by their preferential utilization of acidic proteins such as caseins as substrates. It can phosphorylate a large number of proteins.</text>
</comment>
<comment type="catalytic activity">
    <reaction evidence="6">
        <text>L-seryl-[protein] + ATP = O-phospho-L-seryl-[protein] + ADP + H(+)</text>
        <dbReference type="Rhea" id="RHEA:17989"/>
        <dbReference type="Rhea" id="RHEA-COMP:9863"/>
        <dbReference type="Rhea" id="RHEA-COMP:11604"/>
        <dbReference type="ChEBI" id="CHEBI:15378"/>
        <dbReference type="ChEBI" id="CHEBI:29999"/>
        <dbReference type="ChEBI" id="CHEBI:30616"/>
        <dbReference type="ChEBI" id="CHEBI:83421"/>
        <dbReference type="ChEBI" id="CHEBI:456216"/>
        <dbReference type="EC" id="2.7.11.1"/>
    </reaction>
</comment>
<comment type="catalytic activity">
    <reaction evidence="6">
        <text>L-threonyl-[protein] + ATP = O-phospho-L-threonyl-[protein] + ADP + H(+)</text>
        <dbReference type="Rhea" id="RHEA:46608"/>
        <dbReference type="Rhea" id="RHEA-COMP:11060"/>
        <dbReference type="Rhea" id="RHEA-COMP:11605"/>
        <dbReference type="ChEBI" id="CHEBI:15378"/>
        <dbReference type="ChEBI" id="CHEBI:30013"/>
        <dbReference type="ChEBI" id="CHEBI:30616"/>
        <dbReference type="ChEBI" id="CHEBI:61977"/>
        <dbReference type="ChEBI" id="CHEBI:456216"/>
        <dbReference type="EC" id="2.7.11.1"/>
    </reaction>
</comment>
<comment type="subunit">
    <text evidence="1">Monomer.</text>
</comment>
<comment type="subcellular location">
    <subcellularLocation>
        <location evidence="4">Cytoplasm</location>
    </subcellularLocation>
    <subcellularLocation>
        <location evidence="4">Nucleus</location>
    </subcellularLocation>
</comment>
<comment type="PTM">
    <text evidence="1">Autophosphorylated.</text>
</comment>
<comment type="similarity">
    <text evidence="6">Belongs to the protein kinase superfamily. CK1 Ser/Thr protein kinase family. Casein kinase I subfamily.</text>
</comment>
<organism>
    <name type="scientific">Arabidopsis thaliana</name>
    <name type="common">Mouse-ear cress</name>
    <dbReference type="NCBI Taxonomy" id="3702"/>
    <lineage>
        <taxon>Eukaryota</taxon>
        <taxon>Viridiplantae</taxon>
        <taxon>Streptophyta</taxon>
        <taxon>Embryophyta</taxon>
        <taxon>Tracheophyta</taxon>
        <taxon>Spermatophyta</taxon>
        <taxon>Magnoliopsida</taxon>
        <taxon>eudicotyledons</taxon>
        <taxon>Gunneridae</taxon>
        <taxon>Pentapetalae</taxon>
        <taxon>rosids</taxon>
        <taxon>malvids</taxon>
        <taxon>Brassicales</taxon>
        <taxon>Brassicaceae</taxon>
        <taxon>Camelineae</taxon>
        <taxon>Arabidopsis</taxon>
    </lineage>
</organism>
<proteinExistence type="evidence at protein level"/>
<dbReference type="EC" id="2.7.11.1" evidence="6"/>
<dbReference type="EMBL" id="AY943843">
    <property type="protein sequence ID" value="AAY24533.1"/>
    <property type="molecule type" value="mRNA"/>
</dbReference>
<dbReference type="EMBL" id="AC010926">
    <property type="protein sequence ID" value="AAG51841.1"/>
    <property type="molecule type" value="Genomic_DNA"/>
</dbReference>
<dbReference type="EMBL" id="CP002684">
    <property type="protein sequence ID" value="AEE35363.1"/>
    <property type="molecule type" value="Genomic_DNA"/>
</dbReference>
<dbReference type="EMBL" id="AY059850">
    <property type="protein sequence ID" value="AAL24332.1"/>
    <property type="molecule type" value="mRNA"/>
</dbReference>
<dbReference type="EMBL" id="BT010328">
    <property type="protein sequence ID" value="AAQ55279.1"/>
    <property type="molecule type" value="mRNA"/>
</dbReference>
<dbReference type="PIR" id="H96751">
    <property type="entry name" value="H96751"/>
</dbReference>
<dbReference type="RefSeq" id="NP_177415.1">
    <property type="nucleotide sequence ID" value="NM_105930.3"/>
</dbReference>
<dbReference type="PDB" id="8Y47">
    <property type="method" value="X-ray"/>
    <property type="resolution" value="2.00 A"/>
    <property type="chains" value="B=365-383"/>
</dbReference>
<dbReference type="PDBsum" id="8Y47"/>
<dbReference type="SMR" id="Q9CAI5"/>
<dbReference type="FunCoup" id="Q9CAI5">
    <property type="interactions" value="4666"/>
</dbReference>
<dbReference type="IntAct" id="Q9CAI5">
    <property type="interactions" value="1"/>
</dbReference>
<dbReference type="STRING" id="3702.Q9CAI5"/>
<dbReference type="iPTMnet" id="Q9CAI5"/>
<dbReference type="PaxDb" id="3702-AT1G72710.1"/>
<dbReference type="ProteomicsDB" id="246705"/>
<dbReference type="DNASU" id="843603"/>
<dbReference type="EnsemblPlants" id="AT1G72710.1">
    <property type="protein sequence ID" value="AT1G72710.1"/>
    <property type="gene ID" value="AT1G72710"/>
</dbReference>
<dbReference type="GeneID" id="843603"/>
<dbReference type="Gramene" id="AT1G72710.1">
    <property type="protein sequence ID" value="AT1G72710.1"/>
    <property type="gene ID" value="AT1G72710"/>
</dbReference>
<dbReference type="KEGG" id="ath:AT1G72710"/>
<dbReference type="Araport" id="AT1G72710"/>
<dbReference type="TAIR" id="AT1G72710">
    <property type="gene designation" value="CKL2"/>
</dbReference>
<dbReference type="eggNOG" id="KOG1164">
    <property type="taxonomic scope" value="Eukaryota"/>
</dbReference>
<dbReference type="HOGENOM" id="CLU_019279_0_0_1"/>
<dbReference type="InParanoid" id="Q9CAI5"/>
<dbReference type="OMA" id="MKNYEAN"/>
<dbReference type="PhylomeDB" id="Q9CAI5"/>
<dbReference type="CD-CODE" id="4299E36E">
    <property type="entry name" value="Nucleolus"/>
</dbReference>
<dbReference type="PRO" id="PR:Q9CAI5"/>
<dbReference type="Proteomes" id="UP000006548">
    <property type="component" value="Chromosome 1"/>
</dbReference>
<dbReference type="ExpressionAtlas" id="Q9CAI5">
    <property type="expression patterns" value="baseline and differential"/>
</dbReference>
<dbReference type="GO" id="GO:0005737">
    <property type="term" value="C:cytoplasm"/>
    <property type="evidence" value="ECO:0000314"/>
    <property type="project" value="TAIR"/>
</dbReference>
<dbReference type="GO" id="GO:0005634">
    <property type="term" value="C:nucleus"/>
    <property type="evidence" value="ECO:0000314"/>
    <property type="project" value="TAIR"/>
</dbReference>
<dbReference type="GO" id="GO:0005524">
    <property type="term" value="F:ATP binding"/>
    <property type="evidence" value="ECO:0007669"/>
    <property type="project" value="UniProtKB-KW"/>
</dbReference>
<dbReference type="GO" id="GO:0106310">
    <property type="term" value="F:protein serine kinase activity"/>
    <property type="evidence" value="ECO:0007669"/>
    <property type="project" value="RHEA"/>
</dbReference>
<dbReference type="GO" id="GO:0004674">
    <property type="term" value="F:protein serine/threonine kinase activity"/>
    <property type="evidence" value="ECO:0007669"/>
    <property type="project" value="UniProtKB-KW"/>
</dbReference>
<dbReference type="CDD" id="cd14125">
    <property type="entry name" value="STKc_CK1_delta_epsilon"/>
    <property type="match status" value="1"/>
</dbReference>
<dbReference type="FunFam" id="1.10.510.10:FF:000134">
    <property type="entry name" value="Casein kinase I isoform delta-like"/>
    <property type="match status" value="1"/>
</dbReference>
<dbReference type="FunFam" id="3.30.200.20:FF:000538">
    <property type="entry name" value="Putative Casein kinase I"/>
    <property type="match status" value="1"/>
</dbReference>
<dbReference type="Gene3D" id="1.10.510.10">
    <property type="entry name" value="Transferase(Phosphotransferase) domain 1"/>
    <property type="match status" value="1"/>
</dbReference>
<dbReference type="InterPro" id="IPR050235">
    <property type="entry name" value="CK1_Ser-Thr_kinase"/>
</dbReference>
<dbReference type="InterPro" id="IPR011009">
    <property type="entry name" value="Kinase-like_dom_sf"/>
</dbReference>
<dbReference type="InterPro" id="IPR000719">
    <property type="entry name" value="Prot_kinase_dom"/>
</dbReference>
<dbReference type="InterPro" id="IPR017441">
    <property type="entry name" value="Protein_kinase_ATP_BS"/>
</dbReference>
<dbReference type="InterPro" id="IPR008271">
    <property type="entry name" value="Ser/Thr_kinase_AS"/>
</dbReference>
<dbReference type="PANTHER" id="PTHR11909">
    <property type="entry name" value="CASEIN KINASE-RELATED"/>
    <property type="match status" value="1"/>
</dbReference>
<dbReference type="Pfam" id="PF00069">
    <property type="entry name" value="Pkinase"/>
    <property type="match status" value="1"/>
</dbReference>
<dbReference type="SMART" id="SM00220">
    <property type="entry name" value="S_TKc"/>
    <property type="match status" value="1"/>
</dbReference>
<dbReference type="SUPFAM" id="SSF56112">
    <property type="entry name" value="Protein kinase-like (PK-like)"/>
    <property type="match status" value="1"/>
</dbReference>
<dbReference type="PROSITE" id="PS00107">
    <property type="entry name" value="PROTEIN_KINASE_ATP"/>
    <property type="match status" value="1"/>
</dbReference>
<dbReference type="PROSITE" id="PS50011">
    <property type="entry name" value="PROTEIN_KINASE_DOM"/>
    <property type="match status" value="1"/>
</dbReference>
<dbReference type="PROSITE" id="PS00108">
    <property type="entry name" value="PROTEIN_KINASE_ST"/>
    <property type="match status" value="1"/>
</dbReference>
<evidence type="ECO:0000250" key="1">
    <source>
        <dbReference type="UniProtKB" id="P48730"/>
    </source>
</evidence>
<evidence type="ECO:0000255" key="2">
    <source>
        <dbReference type="PROSITE-ProRule" id="PRU00159"/>
    </source>
</evidence>
<evidence type="ECO:0000256" key="3">
    <source>
        <dbReference type="SAM" id="MobiDB-lite"/>
    </source>
</evidence>
<evidence type="ECO:0000269" key="4">
    <source>
    </source>
</evidence>
<evidence type="ECO:0000303" key="5">
    <source>
    </source>
</evidence>
<evidence type="ECO:0000305" key="6"/>
<evidence type="ECO:0000312" key="7">
    <source>
        <dbReference type="Araport" id="AT1G72710"/>
    </source>
</evidence>
<evidence type="ECO:0000312" key="8">
    <source>
        <dbReference type="EMBL" id="AAG51841.1"/>
    </source>
</evidence>
<reference key="1">
    <citation type="journal article" date="2005" name="Plant Cell">
        <title>Plasmodesmal-associated protein kinase in tobacco and Arabidopsis recognizes a subset of non-cell-autonomous proteins.</title>
        <authorList>
            <person name="Lee J.-Y."/>
            <person name="Taoka K."/>
            <person name="Yoo B.-C."/>
            <person name="Ben-Nissan G."/>
            <person name="Kim D.-J."/>
            <person name="Lucas W.J."/>
        </authorList>
    </citation>
    <scope>NUCLEOTIDE SEQUENCE [MRNA]</scope>
    <scope>SUBCELLULAR LOCATION</scope>
</reference>
<reference key="2">
    <citation type="journal article" date="2000" name="Nature">
        <title>Sequence and analysis of chromosome 1 of the plant Arabidopsis thaliana.</title>
        <authorList>
            <person name="Theologis A."/>
            <person name="Ecker J.R."/>
            <person name="Palm C.J."/>
            <person name="Federspiel N.A."/>
            <person name="Kaul S."/>
            <person name="White O."/>
            <person name="Alonso J."/>
            <person name="Altafi H."/>
            <person name="Araujo R."/>
            <person name="Bowman C.L."/>
            <person name="Brooks S.Y."/>
            <person name="Buehler E."/>
            <person name="Chan A."/>
            <person name="Chao Q."/>
            <person name="Chen H."/>
            <person name="Cheuk R.F."/>
            <person name="Chin C.W."/>
            <person name="Chung M.K."/>
            <person name="Conn L."/>
            <person name="Conway A.B."/>
            <person name="Conway A.R."/>
            <person name="Creasy T.H."/>
            <person name="Dewar K."/>
            <person name="Dunn P."/>
            <person name="Etgu P."/>
            <person name="Feldblyum T.V."/>
            <person name="Feng J.-D."/>
            <person name="Fong B."/>
            <person name="Fujii C.Y."/>
            <person name="Gill J.E."/>
            <person name="Goldsmith A.D."/>
            <person name="Haas B."/>
            <person name="Hansen N.F."/>
            <person name="Hughes B."/>
            <person name="Huizar L."/>
            <person name="Hunter J.L."/>
            <person name="Jenkins J."/>
            <person name="Johnson-Hopson C."/>
            <person name="Khan S."/>
            <person name="Khaykin E."/>
            <person name="Kim C.J."/>
            <person name="Koo H.L."/>
            <person name="Kremenetskaia I."/>
            <person name="Kurtz D.B."/>
            <person name="Kwan A."/>
            <person name="Lam B."/>
            <person name="Langin-Hooper S."/>
            <person name="Lee A."/>
            <person name="Lee J.M."/>
            <person name="Lenz C.A."/>
            <person name="Li J.H."/>
            <person name="Li Y.-P."/>
            <person name="Lin X."/>
            <person name="Liu S.X."/>
            <person name="Liu Z.A."/>
            <person name="Luros J.S."/>
            <person name="Maiti R."/>
            <person name="Marziali A."/>
            <person name="Militscher J."/>
            <person name="Miranda M."/>
            <person name="Nguyen M."/>
            <person name="Nierman W.C."/>
            <person name="Osborne B.I."/>
            <person name="Pai G."/>
            <person name="Peterson J."/>
            <person name="Pham P.K."/>
            <person name="Rizzo M."/>
            <person name="Rooney T."/>
            <person name="Rowley D."/>
            <person name="Sakano H."/>
            <person name="Salzberg S.L."/>
            <person name="Schwartz J.R."/>
            <person name="Shinn P."/>
            <person name="Southwick A.M."/>
            <person name="Sun H."/>
            <person name="Tallon L.J."/>
            <person name="Tambunga G."/>
            <person name="Toriumi M.J."/>
            <person name="Town C.D."/>
            <person name="Utterback T."/>
            <person name="Van Aken S."/>
            <person name="Vaysberg M."/>
            <person name="Vysotskaia V.S."/>
            <person name="Walker M."/>
            <person name="Wu D."/>
            <person name="Yu G."/>
            <person name="Fraser C.M."/>
            <person name="Venter J.C."/>
            <person name="Davis R.W."/>
        </authorList>
    </citation>
    <scope>NUCLEOTIDE SEQUENCE [LARGE SCALE GENOMIC DNA]</scope>
    <source>
        <strain>cv. Columbia</strain>
    </source>
</reference>
<reference key="3">
    <citation type="journal article" date="2017" name="Plant J.">
        <title>Araport11: a complete reannotation of the Arabidopsis thaliana reference genome.</title>
        <authorList>
            <person name="Cheng C.Y."/>
            <person name="Krishnakumar V."/>
            <person name="Chan A.P."/>
            <person name="Thibaud-Nissen F."/>
            <person name="Schobel S."/>
            <person name="Town C.D."/>
        </authorList>
    </citation>
    <scope>GENOME REANNOTATION</scope>
    <source>
        <strain>cv. Columbia</strain>
    </source>
</reference>
<reference key="4">
    <citation type="journal article" date="2003" name="Science">
        <title>Empirical analysis of transcriptional activity in the Arabidopsis genome.</title>
        <authorList>
            <person name="Yamada K."/>
            <person name="Lim J."/>
            <person name="Dale J.M."/>
            <person name="Chen H."/>
            <person name="Shinn P."/>
            <person name="Palm C.J."/>
            <person name="Southwick A.M."/>
            <person name="Wu H.C."/>
            <person name="Kim C.J."/>
            <person name="Nguyen M."/>
            <person name="Pham P.K."/>
            <person name="Cheuk R.F."/>
            <person name="Karlin-Newmann G."/>
            <person name="Liu S.X."/>
            <person name="Lam B."/>
            <person name="Sakano H."/>
            <person name="Wu T."/>
            <person name="Yu G."/>
            <person name="Miranda M."/>
            <person name="Quach H.L."/>
            <person name="Tripp M."/>
            <person name="Chang C.H."/>
            <person name="Lee J.M."/>
            <person name="Toriumi M.J."/>
            <person name="Chan M.M."/>
            <person name="Tang C.C."/>
            <person name="Onodera C.S."/>
            <person name="Deng J.M."/>
            <person name="Akiyama K."/>
            <person name="Ansari Y."/>
            <person name="Arakawa T."/>
            <person name="Banh J."/>
            <person name="Banno F."/>
            <person name="Bowser L."/>
            <person name="Brooks S.Y."/>
            <person name="Carninci P."/>
            <person name="Chao Q."/>
            <person name="Choy N."/>
            <person name="Enju A."/>
            <person name="Goldsmith A.D."/>
            <person name="Gurjal M."/>
            <person name="Hansen N.F."/>
            <person name="Hayashizaki Y."/>
            <person name="Johnson-Hopson C."/>
            <person name="Hsuan V.W."/>
            <person name="Iida K."/>
            <person name="Karnes M."/>
            <person name="Khan S."/>
            <person name="Koesema E."/>
            <person name="Ishida J."/>
            <person name="Jiang P.X."/>
            <person name="Jones T."/>
            <person name="Kawai J."/>
            <person name="Kamiya A."/>
            <person name="Meyers C."/>
            <person name="Nakajima M."/>
            <person name="Narusaka M."/>
            <person name="Seki M."/>
            <person name="Sakurai T."/>
            <person name="Satou M."/>
            <person name="Tamse R."/>
            <person name="Vaysberg M."/>
            <person name="Wallender E.K."/>
            <person name="Wong C."/>
            <person name="Yamamura Y."/>
            <person name="Yuan S."/>
            <person name="Shinozaki K."/>
            <person name="Davis R.W."/>
            <person name="Theologis A."/>
            <person name="Ecker J.R."/>
        </authorList>
    </citation>
    <scope>NUCLEOTIDE SEQUENCE [LARGE SCALE MRNA]</scope>
    <source>
        <strain>cv. Columbia</strain>
    </source>
</reference>
<reference key="5">
    <citation type="journal article" date="2009" name="Plant Physiol.">
        <title>Large-scale Arabidopsis phosphoproteome profiling reveals novel chloroplast kinase substrates and phosphorylation networks.</title>
        <authorList>
            <person name="Reiland S."/>
            <person name="Messerli G."/>
            <person name="Baerenfaller K."/>
            <person name="Gerrits B."/>
            <person name="Endler A."/>
            <person name="Grossmann J."/>
            <person name="Gruissem W."/>
            <person name="Baginsky S."/>
        </authorList>
    </citation>
    <scope>IDENTIFICATION BY MASS SPECTROMETRY [LARGE SCALE ANALYSIS]</scope>
</reference>
<keyword id="KW-0002">3D-structure</keyword>
<keyword id="KW-0067">ATP-binding</keyword>
<keyword id="KW-0963">Cytoplasm</keyword>
<keyword id="KW-0418">Kinase</keyword>
<keyword id="KW-0547">Nucleotide-binding</keyword>
<keyword id="KW-0539">Nucleus</keyword>
<keyword id="KW-1185">Reference proteome</keyword>
<keyword id="KW-0723">Serine/threonine-protein kinase</keyword>
<keyword id="KW-0808">Transferase</keyword>
<gene>
    <name evidence="5" type="primary">CKL2</name>
    <name evidence="7" type="ordered locus">At1g72710</name>
    <name evidence="8" type="ORF">F28P22.10</name>
</gene>
<name>CKL2_ARATH</name>
<protein>
    <recommendedName>
        <fullName evidence="6">Casein kinase 1-like protein 2</fullName>
        <ecNumber evidence="6">2.7.11.1</ecNumber>
    </recommendedName>
    <alternativeName>
        <fullName evidence="5">Protein CASEIN KINASE I-LIKE 2</fullName>
    </alternativeName>
</protein>
<accession>Q9CAI5</accession>
<feature type="chain" id="PRO_0000437144" description="Casein kinase 1-like protein 2">
    <location>
        <begin position="1"/>
        <end position="465"/>
    </location>
</feature>
<feature type="domain" description="Protein kinase" evidence="2">
    <location>
        <begin position="9"/>
        <end position="277"/>
    </location>
</feature>
<feature type="region of interest" description="Disordered" evidence="3">
    <location>
        <begin position="300"/>
        <end position="344"/>
    </location>
</feature>
<feature type="region of interest" description="Disordered" evidence="3">
    <location>
        <begin position="396"/>
        <end position="428"/>
    </location>
</feature>
<feature type="compositionally biased region" description="Polar residues" evidence="3">
    <location>
        <begin position="405"/>
        <end position="428"/>
    </location>
</feature>
<feature type="active site" description="Proton acceptor" evidence="2">
    <location>
        <position position="128"/>
    </location>
</feature>
<feature type="binding site" evidence="2">
    <location>
        <begin position="15"/>
        <end position="23"/>
    </location>
    <ligand>
        <name>ATP</name>
        <dbReference type="ChEBI" id="CHEBI:30616"/>
    </ligand>
</feature>
<feature type="binding site" evidence="2">
    <location>
        <position position="38"/>
    </location>
    <ligand>
        <name>ATP</name>
        <dbReference type="ChEBI" id="CHEBI:30616"/>
    </ligand>
</feature>
<sequence>MEPRVGNKFRLGRKIGGGSFGEIYLGTNIQTNEEVAIKLENVKTKHPQLLYESKLYKVLQGGTGVPNVKWYGVEGDYNVLVIDLLGPSLEDLFNFCSRKLSLKTVLMLADQMINRIEFVHQKSFLHRDIKPDNFLMGLGRRANQVYVIDFGLAKKYRDSNHQHIPYRENKNLTGTARYASMNTHLGIEQSRRDDLESLGFVLMYFLKGSLPWQGLKAGNKKQKYEKISEKKVSTSIEALCRGYPSEFASYFHYCRSLRFDDKPDYAYLKRLFRDLFIREGFQFDYVFDWTILKYQQSQISTPPPRHHGPVVGPSSALPPAITSAERPSGGDEARPSGWSSGIPRRNSGQIFNSGSLAKQKAPVSSDPAISKDVVLSSSSFLRATGSSRRAAVSSSREAAVLGTDSEPSNPQIVEAGSGSNSKIPVSRNSPIVSSEINKLSSPSRATTSVMKNYEANLKGIESLHF</sequence>